<comment type="function">
    <text evidence="1">Usually encoded in the trnK tRNA gene intron. Probably assists in splicing its own and other chloroplast group II introns.</text>
</comment>
<comment type="subcellular location">
    <subcellularLocation>
        <location>Plastid</location>
        <location>Chloroplast</location>
    </subcellularLocation>
</comment>
<comment type="similarity">
    <text evidence="1">Belongs to the intron maturase 2 family. MatK subfamily.</text>
</comment>
<protein>
    <recommendedName>
        <fullName evidence="1">Maturase K</fullName>
    </recommendedName>
    <alternativeName>
        <fullName evidence="1">Intron maturase</fullName>
    </alternativeName>
</protein>
<accession>Q507Y2</accession>
<sequence>MEELQRYLKMDRSRERDFLYPLLFQEYIYALAHDFGLTKLIPYESMQILSYDKKYSSLIVKRLIIRMYQQKHLIILDNDSNQKKFLEHNKNLYSQMLSEGFAVIVEIPFALRLVSSYQGKKMEKSINLGSIHSTFPFLEDKFVHLNHVLNIIIPYPIHLELLVQNLRCWIQDASFLHLLRFFLYEYHNWNSLTTQKTNQNLFFFKENRRFFWFLFNFHVYESESIFLFLRKKSYHLRSTSSIAFLDRTHFYGKIEHFQVVFRNDFHTILWLFKDPFMHYFRYQGKSIMSSKGTPLLMKKWKNYLVNLWEYHFHFWSQPDRLHINQLSNHFLDFLGYLSSVRPNPSVVRNQMLENAFIIDIAINKLDTIVPIIPLIGSLAKANFCNLSGQPVSKPAWTDSPDSDIIDRFGRICRNVSHYYSGSSKKKTLYRIKYILRLSCARTLARNTKSTVRSFLKRLGSEFLEQFLIEEEQVLSFILPKRSSSSQRLSKERVWYFDIIRINDLMDLS</sequence>
<proteinExistence type="inferred from homology"/>
<keyword id="KW-0150">Chloroplast</keyword>
<keyword id="KW-0507">mRNA processing</keyword>
<keyword id="KW-0934">Plastid</keyword>
<keyword id="KW-0694">RNA-binding</keyword>
<keyword id="KW-0819">tRNA processing</keyword>
<feature type="chain" id="PRO_0000143673" description="Maturase K">
    <location>
        <begin position="1"/>
        <end position="508"/>
    </location>
</feature>
<reference key="1">
    <citation type="journal article" date="2005" name="Taxon">
        <title>Phylogenetic relationships and biogeography of Ranunculus and allied genera (Ranunculaceae) in the Mediterranean region and in the European alpine system.</title>
        <authorList>
            <person name="Paun O."/>
            <person name="Lehnebach C."/>
            <person name="Johansson J.T."/>
            <person name="Lockhart P."/>
            <person name="Hoerandl E."/>
        </authorList>
    </citation>
    <scope>NUCLEOTIDE SEQUENCE [GENOMIC DNA]</scope>
</reference>
<dbReference type="EMBL" id="AY954133">
    <property type="protein sequence ID" value="AAY21280.1"/>
    <property type="molecule type" value="Genomic_DNA"/>
</dbReference>
<dbReference type="GO" id="GO:0009507">
    <property type="term" value="C:chloroplast"/>
    <property type="evidence" value="ECO:0007669"/>
    <property type="project" value="UniProtKB-SubCell"/>
</dbReference>
<dbReference type="GO" id="GO:0003723">
    <property type="term" value="F:RNA binding"/>
    <property type="evidence" value="ECO:0007669"/>
    <property type="project" value="UniProtKB-KW"/>
</dbReference>
<dbReference type="GO" id="GO:0006397">
    <property type="term" value="P:mRNA processing"/>
    <property type="evidence" value="ECO:0007669"/>
    <property type="project" value="UniProtKB-KW"/>
</dbReference>
<dbReference type="GO" id="GO:0008380">
    <property type="term" value="P:RNA splicing"/>
    <property type="evidence" value="ECO:0007669"/>
    <property type="project" value="UniProtKB-UniRule"/>
</dbReference>
<dbReference type="GO" id="GO:0008033">
    <property type="term" value="P:tRNA processing"/>
    <property type="evidence" value="ECO:0007669"/>
    <property type="project" value="UniProtKB-KW"/>
</dbReference>
<dbReference type="HAMAP" id="MF_01390">
    <property type="entry name" value="MatK"/>
    <property type="match status" value="1"/>
</dbReference>
<dbReference type="InterPro" id="IPR024937">
    <property type="entry name" value="Domain_X"/>
</dbReference>
<dbReference type="InterPro" id="IPR002866">
    <property type="entry name" value="Maturase_MatK"/>
</dbReference>
<dbReference type="InterPro" id="IPR024942">
    <property type="entry name" value="Maturase_MatK_N"/>
</dbReference>
<dbReference type="PANTHER" id="PTHR34811">
    <property type="entry name" value="MATURASE K"/>
    <property type="match status" value="1"/>
</dbReference>
<dbReference type="PANTHER" id="PTHR34811:SF1">
    <property type="entry name" value="MATURASE K"/>
    <property type="match status" value="1"/>
</dbReference>
<dbReference type="Pfam" id="PF01348">
    <property type="entry name" value="Intron_maturas2"/>
    <property type="match status" value="1"/>
</dbReference>
<dbReference type="Pfam" id="PF01824">
    <property type="entry name" value="MatK_N"/>
    <property type="match status" value="1"/>
</dbReference>
<geneLocation type="chloroplast"/>
<organism>
    <name type="scientific">Ranunculus trichophyllus</name>
    <name type="common">Whitewater crowfoot</name>
    <dbReference type="NCBI Taxonomy" id="22903"/>
    <lineage>
        <taxon>Eukaryota</taxon>
        <taxon>Viridiplantae</taxon>
        <taxon>Streptophyta</taxon>
        <taxon>Embryophyta</taxon>
        <taxon>Tracheophyta</taxon>
        <taxon>Spermatophyta</taxon>
        <taxon>Magnoliopsida</taxon>
        <taxon>Ranunculales</taxon>
        <taxon>Ranunculaceae</taxon>
        <taxon>Ranunculoideae</taxon>
        <taxon>Ranunculeae</taxon>
        <taxon>Ranunculus</taxon>
    </lineage>
</organism>
<name>MATK_RANTR</name>
<evidence type="ECO:0000255" key="1">
    <source>
        <dbReference type="HAMAP-Rule" id="MF_01390"/>
    </source>
</evidence>
<gene>
    <name evidence="1" type="primary">matK</name>
</gene>